<feature type="signal peptide" evidence="2">
    <location>
        <begin position="1"/>
        <end position="20"/>
    </location>
</feature>
<feature type="chain" id="PRO_0000019590" description="Sporulation-specific protein 19">
    <location>
        <begin position="21"/>
        <end position="198"/>
    </location>
</feature>
<feature type="propeptide" id="PRO_0000372457" description="Removed in mature form" evidence="2">
    <location>
        <begin position="199"/>
        <end position="223"/>
    </location>
</feature>
<feature type="lipid moiety-binding region" description="GPI-anchor amidated asparagine" evidence="2">
    <location>
        <position position="198"/>
    </location>
</feature>
<sequence length="223" mass="24989">MKKQILIVAAQSILCSTVFGERSNVGLSTEELGGDSILYFNEDPIVIEIDKKAIDKKTLEQLASTRDVVLTDLPDTLEFIDFNEYAKMKSKSDMLLEYINEYEFDDFERSSEGGLEEEEEEDLIYDFNAQAEDLGKLGSNIYEVVEEKNIVNTYDGNLINASTTESTTTIRPFVTSHSYVASSTPYSNISSLNEDYDNASNFLTPTTVALAVLLTILLFIQAY</sequence>
<comment type="function">
    <text evidence="3">Involved in sporulation. Essential for completion of the nuclear division.</text>
</comment>
<comment type="subcellular location">
    <subcellularLocation>
        <location evidence="5">Secreted</location>
        <location evidence="5">Cell wall</location>
    </subcellularLocation>
    <subcellularLocation>
        <location evidence="4">Membrane</location>
        <topology evidence="4">Lipid-anchor</topology>
        <topology evidence="4">GPI-anchor</topology>
    </subcellularLocation>
</comment>
<comment type="developmental stage">
    <text>Expressed in late pachytene.</text>
</comment>
<comment type="PTM">
    <text evidence="1">The GPI-anchor is attached to the protein in the endoplasmic reticulum and serves to target the protein to the cell surface. There, the glucosamine-inositol phospholipid moiety is cleaved off and the GPI-modified mannoprotein is covalently attached via its lipidless GPI glycan remnant to the 1,6-beta-glucan of the outer cell wall layer (By similarity).</text>
</comment>
<evidence type="ECO:0000250" key="1"/>
<evidence type="ECO:0000255" key="2"/>
<evidence type="ECO:0000269" key="3">
    <source>
    </source>
</evidence>
<evidence type="ECO:0000305" key="4"/>
<evidence type="ECO:0000305" key="5">
    <source>
    </source>
</evidence>
<protein>
    <recommendedName>
        <fullName>Sporulation-specific protein 19</fullName>
    </recommendedName>
</protein>
<gene>
    <name type="primary">SPO19</name>
    <name type="ordered locus">YPL130W</name>
</gene>
<organism>
    <name type="scientific">Saccharomyces cerevisiae (strain ATCC 204508 / S288c)</name>
    <name type="common">Baker's yeast</name>
    <dbReference type="NCBI Taxonomy" id="559292"/>
    <lineage>
        <taxon>Eukaryota</taxon>
        <taxon>Fungi</taxon>
        <taxon>Dikarya</taxon>
        <taxon>Ascomycota</taxon>
        <taxon>Saccharomycotina</taxon>
        <taxon>Saccharomycetes</taxon>
        <taxon>Saccharomycetales</taxon>
        <taxon>Saccharomycetaceae</taxon>
        <taxon>Saccharomyces</taxon>
    </lineage>
</organism>
<reference key="1">
    <citation type="journal article" date="1997" name="Nature">
        <title>The nucleotide sequence of Saccharomyces cerevisiae chromosome XVI.</title>
        <authorList>
            <person name="Bussey H."/>
            <person name="Storms R.K."/>
            <person name="Ahmed A."/>
            <person name="Albermann K."/>
            <person name="Allen E."/>
            <person name="Ansorge W."/>
            <person name="Araujo R."/>
            <person name="Aparicio A."/>
            <person name="Barrell B.G."/>
            <person name="Badcock K."/>
            <person name="Benes V."/>
            <person name="Botstein D."/>
            <person name="Bowman S."/>
            <person name="Brueckner M."/>
            <person name="Carpenter J."/>
            <person name="Cherry J.M."/>
            <person name="Chung E."/>
            <person name="Churcher C.M."/>
            <person name="Coster F."/>
            <person name="Davis K."/>
            <person name="Davis R.W."/>
            <person name="Dietrich F.S."/>
            <person name="Delius H."/>
            <person name="DiPaolo T."/>
            <person name="Dubois E."/>
            <person name="Duesterhoeft A."/>
            <person name="Duncan M."/>
            <person name="Floeth M."/>
            <person name="Fortin N."/>
            <person name="Friesen J.D."/>
            <person name="Fritz C."/>
            <person name="Goffeau A."/>
            <person name="Hall J."/>
            <person name="Hebling U."/>
            <person name="Heumann K."/>
            <person name="Hilbert H."/>
            <person name="Hillier L.W."/>
            <person name="Hunicke-Smith S."/>
            <person name="Hyman R.W."/>
            <person name="Johnston M."/>
            <person name="Kalman S."/>
            <person name="Kleine K."/>
            <person name="Komp C."/>
            <person name="Kurdi O."/>
            <person name="Lashkari D."/>
            <person name="Lew H."/>
            <person name="Lin A."/>
            <person name="Lin D."/>
            <person name="Louis E.J."/>
            <person name="Marathe R."/>
            <person name="Messenguy F."/>
            <person name="Mewes H.-W."/>
            <person name="Mirtipati S."/>
            <person name="Moestl D."/>
            <person name="Mueller-Auer S."/>
            <person name="Namath A."/>
            <person name="Nentwich U."/>
            <person name="Oefner P."/>
            <person name="Pearson D."/>
            <person name="Petel F.X."/>
            <person name="Pohl T.M."/>
            <person name="Purnelle B."/>
            <person name="Rajandream M.A."/>
            <person name="Rechmann S."/>
            <person name="Rieger M."/>
            <person name="Riles L."/>
            <person name="Roberts D."/>
            <person name="Schaefer M."/>
            <person name="Scharfe M."/>
            <person name="Scherens B."/>
            <person name="Schramm S."/>
            <person name="Schroeder M."/>
            <person name="Sdicu A.-M."/>
            <person name="Tettelin H."/>
            <person name="Urrestarazu L.A."/>
            <person name="Ushinsky S."/>
            <person name="Vierendeels F."/>
            <person name="Vissers S."/>
            <person name="Voss H."/>
            <person name="Walsh S.V."/>
            <person name="Wambutt R."/>
            <person name="Wang Y."/>
            <person name="Wedler E."/>
            <person name="Wedler H."/>
            <person name="Winnett E."/>
            <person name="Zhong W.-W."/>
            <person name="Zollner A."/>
            <person name="Vo D.H."/>
            <person name="Hani J."/>
        </authorList>
    </citation>
    <scope>NUCLEOTIDE SEQUENCE [LARGE SCALE GENOMIC DNA]</scope>
    <source>
        <strain>ATCC 204508 / S288c</strain>
    </source>
</reference>
<reference key="2">
    <citation type="journal article" date="2014" name="G3 (Bethesda)">
        <title>The reference genome sequence of Saccharomyces cerevisiae: Then and now.</title>
        <authorList>
            <person name="Engel S.R."/>
            <person name="Dietrich F.S."/>
            <person name="Fisk D.G."/>
            <person name="Binkley G."/>
            <person name="Balakrishnan R."/>
            <person name="Costanzo M.C."/>
            <person name="Dwight S.S."/>
            <person name="Hitz B.C."/>
            <person name="Karra K."/>
            <person name="Nash R.S."/>
            <person name="Weng S."/>
            <person name="Wong E.D."/>
            <person name="Lloyd P."/>
            <person name="Skrzypek M.S."/>
            <person name="Miyasato S.R."/>
            <person name="Simison M."/>
            <person name="Cherry J.M."/>
        </authorList>
    </citation>
    <scope>GENOME REANNOTATION</scope>
    <source>
        <strain>ATCC 204508 / S288c</strain>
    </source>
</reference>
<reference key="3">
    <citation type="journal article" date="2007" name="Genome Res.">
        <title>Approaching a complete repository of sequence-verified protein-encoding clones for Saccharomyces cerevisiae.</title>
        <authorList>
            <person name="Hu Y."/>
            <person name="Rolfs A."/>
            <person name="Bhullar B."/>
            <person name="Murthy T.V.S."/>
            <person name="Zhu C."/>
            <person name="Berger M.F."/>
            <person name="Camargo A.A."/>
            <person name="Kelley F."/>
            <person name="McCarron S."/>
            <person name="Jepson D."/>
            <person name="Richardson A."/>
            <person name="Raphael J."/>
            <person name="Moreira D."/>
            <person name="Taycher E."/>
            <person name="Zuo D."/>
            <person name="Mohr S."/>
            <person name="Kane M.F."/>
            <person name="Williamson J."/>
            <person name="Simpson A.J.G."/>
            <person name="Bulyk M.L."/>
            <person name="Harlow E."/>
            <person name="Marsischky G."/>
            <person name="Kolodner R.D."/>
            <person name="LaBaer J."/>
        </authorList>
    </citation>
    <scope>NUCLEOTIDE SEQUENCE [GENOMIC DNA]</scope>
    <source>
        <strain>ATCC 204508 / S288c</strain>
    </source>
</reference>
<reference key="4">
    <citation type="journal article" date="1999" name="J. Bacteriol.">
        <title>Amino acid residues in the omega-minus region participate in cellular localization of yeast glycosylphosphatidylinositol-attached proteins.</title>
        <authorList>
            <person name="Hamada K."/>
            <person name="Terashima H."/>
            <person name="Arisawa M."/>
            <person name="Yabuki N."/>
            <person name="Kitada K."/>
        </authorList>
    </citation>
    <scope>SUBCELLULAR LOCATION</scope>
</reference>
<reference key="5">
    <citation type="journal article" date="2000" name="Nat. Genet.">
        <title>The core meiotic transcriptome in budding yeasts.</title>
        <authorList>
            <person name="Primig M."/>
            <person name="Williams R.M."/>
            <person name="Winzeler E.A."/>
            <person name="Tevzadze G.G."/>
            <person name="Conway A.R."/>
            <person name="Hwang S.Y."/>
            <person name="Davis R.W."/>
            <person name="Esposito R.E."/>
        </authorList>
    </citation>
    <scope>FUNCTION</scope>
</reference>
<name>SPO19_YEAST</name>
<proteinExistence type="evidence at transcript level"/>
<keyword id="KW-0134">Cell wall</keyword>
<keyword id="KW-0325">Glycoprotein</keyword>
<keyword id="KW-0336">GPI-anchor</keyword>
<keyword id="KW-0449">Lipoprotein</keyword>
<keyword id="KW-0469">Meiosis</keyword>
<keyword id="KW-0472">Membrane</keyword>
<keyword id="KW-1185">Reference proteome</keyword>
<keyword id="KW-0964">Secreted</keyword>
<keyword id="KW-0732">Signal</keyword>
<keyword id="KW-0749">Sporulation</keyword>
<dbReference type="EMBL" id="U43703">
    <property type="protein sequence ID" value="AAB68229.1"/>
    <property type="molecule type" value="Genomic_DNA"/>
</dbReference>
<dbReference type="EMBL" id="AY693111">
    <property type="protein sequence ID" value="AAT93130.1"/>
    <property type="molecule type" value="Genomic_DNA"/>
</dbReference>
<dbReference type="EMBL" id="BK006949">
    <property type="protein sequence ID" value="DAA11303.1"/>
    <property type="molecule type" value="Genomic_DNA"/>
</dbReference>
<dbReference type="PIR" id="S69054">
    <property type="entry name" value="S69054"/>
</dbReference>
<dbReference type="RefSeq" id="NP_015195.1">
    <property type="nucleotide sequence ID" value="NM_001183944.1"/>
</dbReference>
<dbReference type="SMR" id="Q03029"/>
<dbReference type="BioGRID" id="36051">
    <property type="interactions" value="124"/>
</dbReference>
<dbReference type="DIP" id="DIP-3997N"/>
<dbReference type="FunCoup" id="Q03029">
    <property type="interactions" value="41"/>
</dbReference>
<dbReference type="IntAct" id="Q03029">
    <property type="interactions" value="2"/>
</dbReference>
<dbReference type="MINT" id="Q03029"/>
<dbReference type="STRING" id="4932.YPL130W"/>
<dbReference type="PaxDb" id="4932-YPL130W"/>
<dbReference type="PeptideAtlas" id="Q03029"/>
<dbReference type="EnsemblFungi" id="YPL130W_mRNA">
    <property type="protein sequence ID" value="YPL130W"/>
    <property type="gene ID" value="YPL130W"/>
</dbReference>
<dbReference type="GeneID" id="855973"/>
<dbReference type="KEGG" id="sce:YPL130W"/>
<dbReference type="AGR" id="SGD:S000006051"/>
<dbReference type="SGD" id="S000006051">
    <property type="gene designation" value="SPO19"/>
</dbReference>
<dbReference type="VEuPathDB" id="FungiDB:YPL130W"/>
<dbReference type="HOGENOM" id="CLU_1240746_0_0_1"/>
<dbReference type="InParanoid" id="Q03029"/>
<dbReference type="OMA" id="YFNEDPI"/>
<dbReference type="OrthoDB" id="4058759at2759"/>
<dbReference type="BioCyc" id="YEAST:G3O-34029-MONOMER"/>
<dbReference type="BioGRID-ORCS" id="855973">
    <property type="hits" value="0 hits in 10 CRISPR screens"/>
</dbReference>
<dbReference type="PRO" id="PR:Q03029"/>
<dbReference type="Proteomes" id="UP000002311">
    <property type="component" value="Chromosome XVI"/>
</dbReference>
<dbReference type="RNAct" id="Q03029">
    <property type="molecule type" value="protein"/>
</dbReference>
<dbReference type="GO" id="GO:0005576">
    <property type="term" value="C:extracellular region"/>
    <property type="evidence" value="ECO:0007669"/>
    <property type="project" value="UniProtKB-KW"/>
</dbReference>
<dbReference type="GO" id="GO:0009277">
    <property type="term" value="C:fungal-type cell wall"/>
    <property type="evidence" value="ECO:0000314"/>
    <property type="project" value="SGD"/>
</dbReference>
<dbReference type="GO" id="GO:0005628">
    <property type="term" value="C:prospore membrane"/>
    <property type="evidence" value="ECO:0000314"/>
    <property type="project" value="SGD"/>
</dbReference>
<dbReference type="GO" id="GO:0098552">
    <property type="term" value="C:side of membrane"/>
    <property type="evidence" value="ECO:0007669"/>
    <property type="project" value="UniProtKB-KW"/>
</dbReference>
<dbReference type="GO" id="GO:0051321">
    <property type="term" value="P:meiotic cell cycle"/>
    <property type="evidence" value="ECO:0000316"/>
    <property type="project" value="SGD"/>
</dbReference>
<dbReference type="GO" id="GO:0070583">
    <property type="term" value="P:spore membrane bending pathway"/>
    <property type="evidence" value="ECO:0000315"/>
    <property type="project" value="SGD"/>
</dbReference>
<accession>Q03029</accession>
<accession>D6W3N7</accession>